<organism evidence="9">
    <name type="scientific">Caenorhabditis elegans</name>
    <dbReference type="NCBI Taxonomy" id="6239"/>
    <lineage>
        <taxon>Eukaryota</taxon>
        <taxon>Metazoa</taxon>
        <taxon>Ecdysozoa</taxon>
        <taxon>Nematoda</taxon>
        <taxon>Chromadorea</taxon>
        <taxon>Rhabditida</taxon>
        <taxon>Rhabditina</taxon>
        <taxon>Rhabditomorpha</taxon>
        <taxon>Rhabditoidea</taxon>
        <taxon>Rhabditidae</taxon>
        <taxon>Peloderinae</taxon>
        <taxon>Caenorhabditis</taxon>
    </lineage>
</organism>
<protein>
    <recommendedName>
        <fullName evidence="10">Long arms of the bivalent protein 1</fullName>
    </recommendedName>
</protein>
<dbReference type="EMBL" id="BX284601">
    <property type="protein sequence ID" value="CAA99761.1"/>
    <property type="molecule type" value="Genomic_DNA"/>
</dbReference>
<dbReference type="PIR" id="T18881">
    <property type="entry name" value="T18881"/>
</dbReference>
<dbReference type="RefSeq" id="NP_492566.1">
    <property type="nucleotide sequence ID" value="NM_060165.7"/>
</dbReference>
<dbReference type="DIP" id="DIP-59875N"/>
<dbReference type="FunCoup" id="Q17604">
    <property type="interactions" value="1527"/>
</dbReference>
<dbReference type="IntAct" id="Q17604">
    <property type="interactions" value="19"/>
</dbReference>
<dbReference type="STRING" id="6239.C03D6.6.1"/>
<dbReference type="PaxDb" id="6239-C03D6.6"/>
<dbReference type="EnsemblMetazoa" id="C03D6.6.1">
    <property type="protein sequence ID" value="C03D6.6.1"/>
    <property type="gene ID" value="WBGene00007278"/>
</dbReference>
<dbReference type="GeneID" id="182160"/>
<dbReference type="KEGG" id="cel:CELE_C03D6.6"/>
<dbReference type="UCSC" id="C03D6.6">
    <property type="organism name" value="c. elegans"/>
</dbReference>
<dbReference type="AGR" id="WB:WBGene00007278"/>
<dbReference type="CTD" id="182160"/>
<dbReference type="WormBase" id="C03D6.6">
    <property type="protein sequence ID" value="CE15580"/>
    <property type="gene ID" value="WBGene00007278"/>
    <property type="gene designation" value="lab-1"/>
</dbReference>
<dbReference type="eggNOG" id="ENOG502TIER">
    <property type="taxonomic scope" value="Eukaryota"/>
</dbReference>
<dbReference type="HOGENOM" id="CLU_1612273_0_0_1"/>
<dbReference type="InParanoid" id="Q17604"/>
<dbReference type="OMA" id="ETMENCE"/>
<dbReference type="OrthoDB" id="5826057at2759"/>
<dbReference type="PRO" id="PR:Q17604"/>
<dbReference type="Proteomes" id="UP000001940">
    <property type="component" value="Chromosome I"/>
</dbReference>
<dbReference type="Bgee" id="WBGene00007278">
    <property type="expression patterns" value="Expressed in germ line (C elegans) and 3 other cell types or tissues"/>
</dbReference>
<dbReference type="GO" id="GO:0000793">
    <property type="term" value="C:condensed chromosome"/>
    <property type="evidence" value="ECO:0000314"/>
    <property type="project" value="WormBase"/>
</dbReference>
<dbReference type="GO" id="GO:0005634">
    <property type="term" value="C:nucleus"/>
    <property type="evidence" value="ECO:0000314"/>
    <property type="project" value="WormBase"/>
</dbReference>
<dbReference type="GO" id="GO:0008157">
    <property type="term" value="F:protein phosphatase 1 binding"/>
    <property type="evidence" value="ECO:0000353"/>
    <property type="project" value="WormBase"/>
</dbReference>
<dbReference type="GO" id="GO:0034089">
    <property type="term" value="P:establishment of meiotic sister chromatid cohesion"/>
    <property type="evidence" value="ECO:0000315"/>
    <property type="project" value="WormBase"/>
</dbReference>
<dbReference type="GO" id="GO:0034090">
    <property type="term" value="P:maintenance of meiotic sister chromatid cohesion"/>
    <property type="evidence" value="ECO:0000315"/>
    <property type="project" value="WormBase"/>
</dbReference>
<dbReference type="GO" id="GO:1900181">
    <property type="term" value="P:negative regulation of protein localization to nucleus"/>
    <property type="evidence" value="ECO:0000315"/>
    <property type="project" value="WormBase"/>
</dbReference>
<dbReference type="GO" id="GO:1900182">
    <property type="term" value="P:positive regulation of protein localization to nucleus"/>
    <property type="evidence" value="ECO:0000315"/>
    <property type="project" value="WormBase"/>
</dbReference>
<evidence type="ECO:0000256" key="1">
    <source>
        <dbReference type="SAM" id="MobiDB-lite"/>
    </source>
</evidence>
<evidence type="ECO:0000269" key="2">
    <source>
    </source>
</evidence>
<evidence type="ECO:0000269" key="3">
    <source>
    </source>
</evidence>
<evidence type="ECO:0000269" key="4">
    <source>
    </source>
</evidence>
<evidence type="ECO:0000269" key="5">
    <source>
    </source>
</evidence>
<evidence type="ECO:0000303" key="6">
    <source>
    </source>
</evidence>
<evidence type="ECO:0000305" key="7"/>
<evidence type="ECO:0000305" key="8">
    <source>
    </source>
</evidence>
<evidence type="ECO:0000312" key="9">
    <source>
        <dbReference type="Proteomes" id="UP000001940"/>
    </source>
</evidence>
<evidence type="ECO:0000312" key="10">
    <source>
        <dbReference type="WormBase" id="C03D6.6"/>
    </source>
</evidence>
<keyword id="KW-0158">Chromosome</keyword>
<keyword id="KW-0539">Nucleus</keyword>
<keyword id="KW-1185">Reference proteome</keyword>
<name>LAB1_CAEEL</name>
<comment type="function">
    <text evidence="2 3 4 5">Involved in sister chromatid cohesion during mitosis and meiosis (PubMed:18923084, PubMed:22927794, PubMed:30921322). In association with the gsp-2 phosphatase, it both restricts the localization and antagonizes the function of the air-2 kinase during meiosis I and mitosis to promote chromatid cohesion and spindle attachment (PubMed:18923084, PubMed:22927794, PubMed:29483514, PubMed:30921322). This in turn, drives germ cell immortality (PubMed:30921322). Furthermore, may play a role in ensuring the timely assembly of the synaptonemal complex during prophase I of meiosis (PubMed:18923084, PubMed:22927794).</text>
</comment>
<comment type="subunit">
    <text evidence="3">Interacts with gsp-1 and gsp-2; the interaction is direct.</text>
</comment>
<comment type="interaction">
    <interactant intactId="EBI-16011794">
        <id>Q17604</id>
    </interactant>
    <interactant intactId="EBI-2416859">
        <id>Q27497</id>
        <label>gsp-1</label>
    </interactant>
    <organismsDiffer>false</organismsDiffer>
    <experiments>3</experiments>
</comment>
<comment type="interaction">
    <interactant intactId="EBI-16011794">
        <id>Q17604</id>
    </interactant>
    <interactant intactId="EBI-2418500">
        <id>P48727</id>
        <label>gsp-2</label>
    </interactant>
    <organismsDiffer>false</organismsDiffer>
    <experiments>2</experiments>
</comment>
<comment type="subcellular location">
    <subcellularLocation>
        <location evidence="2 3 4 5">Chromosome</location>
    </subcellularLocation>
    <subcellularLocation>
        <location evidence="5">Nucleus</location>
    </subcellularLocation>
    <text evidence="2 3 4 5">Recruited to chromosomes by smc-3 which is a component of the cohesin complex, and the proteins htp-1, htp-2 and htp-3 (PubMed:22927794, PubMed:29483514). Localizes to chromosomes in the mid-pachytene phase of prophase I to the end of meiosis I (PubMed:18923084, PubMed:30921322). Localizes to the long arms of chromosomes during diakinesis phase of prophase I of meiosis (PubMed:18923084, PubMed:30921322). Does not localize to chromosomes in meiosis II (PubMed:18923084). Localizes to chromosomes in prophase of mitosis in the first embryonic division and subsequently from late prophase to anaphase during early embryonic division (PubMed:18923084).</text>
</comment>
<comment type="developmental stage">
    <text evidence="2">Expressed in 1- to 100-cell stage embryos.</text>
</comment>
<comment type="disruption phenotype">
    <text evidence="2 3 5">RNAi-mediated knockdown results in embryonic lethality in 57% of animals, and of the surviving progeny, there is a 6% increase in the number of males (Him phenotype) (PubMed:18923084). Defective sister chromatid cohesion during meiosis and mitosis (PubMed:18923084, PubMed:22927794). Mis-localized air-2 in oocytes at the diakinesis phase of prophase I in meiosis (PubMed:18923084, PubMed:22927794). Impaired meiotic DNA double-strand break repair as evidenced by increased rad-51 positive nuclei throughout late pachytene to early diplotene in gonads, and impaired number of crossover recombination events between chromatids (PubMed:22927794). Absent syp-1, a core component of the synaptonemal complex, at the pachytene stage of meiosis (PubMed:22927794). Reduced expression of the gsp-2 phosphatase (PubMed:30921322).</text>
</comment>
<accession>Q17604</accession>
<accession>Q17605</accession>
<feature type="chain" id="PRO_0000448965" description="Long arms of the bivalent protein 1">
    <location>
        <begin position="1"/>
        <end position="161"/>
    </location>
</feature>
<feature type="region of interest" description="Disordered" evidence="1">
    <location>
        <begin position="85"/>
        <end position="161"/>
    </location>
</feature>
<feature type="short sequence motif" description="PP1 binding motif" evidence="8">
    <location>
        <begin position="72"/>
        <end position="75"/>
    </location>
</feature>
<feature type="compositionally biased region" description="Polar residues" evidence="1">
    <location>
        <begin position="97"/>
        <end position="115"/>
    </location>
</feature>
<feature type="compositionally biased region" description="Basic and acidic residues" evidence="1">
    <location>
        <begin position="120"/>
        <end position="129"/>
    </location>
</feature>
<feature type="compositionally biased region" description="Acidic residues" evidence="1">
    <location>
        <begin position="130"/>
        <end position="151"/>
    </location>
</feature>
<feature type="mutagenesis site" description="Does not impair binding to gsp-1 and gsp-2." evidence="3">
    <original>VIW</original>
    <variation>AIA</variation>
    <location>
        <begin position="73"/>
        <end position="75"/>
    </location>
</feature>
<reference evidence="9" key="1">
    <citation type="journal article" date="1998" name="Science">
        <title>Genome sequence of the nematode C. elegans: a platform for investigating biology.</title>
        <authorList>
            <consortium name="The C. elegans sequencing consortium"/>
        </authorList>
    </citation>
    <scope>NUCLEOTIDE SEQUENCE [LARGE SCALE GENOMIC DNA]</scope>
    <source>
        <strain evidence="9">Bristol N2</strain>
    </source>
</reference>
<reference evidence="7" key="2">
    <citation type="journal article" date="2008" name="Genes Dev.">
        <title>LAB-1 antagonizes the Aurora B kinase in C. elegans.</title>
        <authorList>
            <person name="de Carvalho C.E."/>
            <person name="Zaaijer S."/>
            <person name="Smolikov S."/>
            <person name="Gu Y."/>
            <person name="Schumacher J.M."/>
            <person name="Colaiacovo M.P."/>
        </authorList>
    </citation>
    <scope>FUNCTION</scope>
    <scope>SUBCELLULAR LOCATION</scope>
    <scope>DEVELOPMENTAL STAGE</scope>
    <scope>DISRUPTION PHENOTYPE</scope>
</reference>
<reference evidence="7" key="3">
    <citation type="journal article" date="2012" name="PLoS Biol.">
        <title>LAB-1 targets PP1 and restricts Aurora B kinase upon entrance into meiosis to promote sister chromatid cohesion.</title>
        <authorList>
            <person name="Tzur Y.B."/>
            <person name="Egydio de Carvalho C."/>
            <person name="Nadarajan S."/>
            <person name="Van Bostelen I."/>
            <person name="Gu Y."/>
            <person name="Chu D.S."/>
            <person name="Cheeseman I.M."/>
            <person name="Colaiacovo M.P."/>
        </authorList>
    </citation>
    <scope>FUNCTION</scope>
    <scope>INTERACTION WITH GSP-1 AND GSP-2</scope>
    <scope>SUBCELLULAR LOCATION</scope>
    <scope>DISRUPTION PHENOTYPE</scope>
    <scope>MUTAGENESIS OF 73-VAL--TRP-75</scope>
</reference>
<reference evidence="7" key="4">
    <citation type="journal article" date="2018" name="Nat. Commun.">
        <title>Spatiotemporal regulation of Aurora B recruitment ensures release of cohesion during C. elegans oocyte meiosis.</title>
        <authorList>
            <person name="Ferrandiz N."/>
            <person name="Barroso C."/>
            <person name="Telecan O."/>
            <person name="Shao N."/>
            <person name="Kim H.M."/>
            <person name="Testori S."/>
            <person name="Faull P."/>
            <person name="Cutillas P."/>
            <person name="Snijders A.P."/>
            <person name="Colaiacovo M.P."/>
            <person name="Martinez-Perez E."/>
        </authorList>
    </citation>
    <scope>FUNCTION</scope>
    <scope>SUBCELLULAR LOCATION</scope>
</reference>
<reference key="5">
    <citation type="journal article" date="2018" name="Nat. Commun.">
        <authorList>
            <person name="Ferrandiz N."/>
            <person name="Barroso C."/>
            <person name="Telecan O."/>
            <person name="Shao N."/>
            <person name="Kim H.M."/>
            <person name="Testori S."/>
            <person name="Faull P."/>
            <person name="Cutillas P."/>
            <person name="Snijders A.P."/>
            <person name="Colaiacovo M.P."/>
            <person name="Martinez-Perez E."/>
        </authorList>
    </citation>
    <scope>ERRATUM OF PUBMED:29483514</scope>
</reference>
<reference evidence="7" key="6">
    <citation type="journal article" date="2019" name="PLoS Genet.">
        <title>The meiotic phosphatase GSP-2/PP1 promotes germline immortality and small RNA-mediated genome silencing.</title>
        <authorList>
            <person name="Billmyre K.K."/>
            <person name="Doebley A.L."/>
            <person name="Spichal M."/>
            <person name="Heestand B."/>
            <person name="Belicard T."/>
            <person name="Sato-Carlton A."/>
            <person name="Flibotte S."/>
            <person name="Simon M."/>
            <person name="Gnazzo M."/>
            <person name="Skop A."/>
            <person name="Moerman D."/>
            <person name="Carlton P.M."/>
            <person name="Sarkies P."/>
            <person name="Ahmed S."/>
        </authorList>
    </citation>
    <scope>FUNCTION</scope>
    <scope>SUBCELLULAR LOCATION</scope>
    <scope>DISRUPTION PHENOTYPE</scope>
</reference>
<sequence>MVSHKKNDRPRPLWILKIHKRLSLFEFKRYATGIGKDDGQDISWVLKGNAKNNVYQVTVETMENCETDECKKVIWVPDELAESTGTMFEDFKEDQPQESVSSISNNEANWGSSVNELDENYEKMQKEETFDPYDSDSDTSEDSDFDEDFEDSDKTMCSGQS</sequence>
<proteinExistence type="evidence at protein level"/>
<gene>
    <name evidence="6 10" type="primary">lab-1</name>
    <name evidence="10" type="ORF">C03D6.6</name>
</gene>